<keyword id="KW-0687">Ribonucleoprotein</keyword>
<keyword id="KW-0689">Ribosomal protein</keyword>
<keyword id="KW-0694">RNA-binding</keyword>
<keyword id="KW-0699">rRNA-binding</keyword>
<feature type="chain" id="PRO_1000052534" description="Large ribosomal subunit protein uL22">
    <location>
        <begin position="1"/>
        <end position="114"/>
    </location>
</feature>
<sequence length="114" mass="12394">MEAIAKHRYARTSAQKARLVADQVRGLSVDKALNILTFSPKKAAVLVKKVLESAIANAEHNEGADIDALRVATIMVDEGPSMKRIRPRAKGRADRILKRTAHITVVVSDAKAGR</sequence>
<name>RL22_AERS4</name>
<accession>A4ST01</accession>
<comment type="function">
    <text evidence="1">This protein binds specifically to 23S rRNA; its binding is stimulated by other ribosomal proteins, e.g. L4, L17, and L20. It is important during the early stages of 50S assembly. It makes multiple contacts with different domains of the 23S rRNA in the assembled 50S subunit and ribosome (By similarity).</text>
</comment>
<comment type="function">
    <text evidence="1">The globular domain of the protein is located near the polypeptide exit tunnel on the outside of the subunit, while an extended beta-hairpin is found that lines the wall of the exit tunnel in the center of the 70S ribosome.</text>
</comment>
<comment type="subunit">
    <text evidence="1">Part of the 50S ribosomal subunit.</text>
</comment>
<comment type="similarity">
    <text evidence="1">Belongs to the universal ribosomal protein uL22 family.</text>
</comment>
<evidence type="ECO:0000255" key="1">
    <source>
        <dbReference type="HAMAP-Rule" id="MF_01331"/>
    </source>
</evidence>
<evidence type="ECO:0000305" key="2"/>
<proteinExistence type="inferred from homology"/>
<organism>
    <name type="scientific">Aeromonas salmonicida (strain A449)</name>
    <dbReference type="NCBI Taxonomy" id="382245"/>
    <lineage>
        <taxon>Bacteria</taxon>
        <taxon>Pseudomonadati</taxon>
        <taxon>Pseudomonadota</taxon>
        <taxon>Gammaproteobacteria</taxon>
        <taxon>Aeromonadales</taxon>
        <taxon>Aeromonadaceae</taxon>
        <taxon>Aeromonas</taxon>
    </lineage>
</organism>
<reference key="1">
    <citation type="journal article" date="2008" name="BMC Genomics">
        <title>The genome of Aeromonas salmonicida subsp. salmonicida A449: insights into the evolution of a fish pathogen.</title>
        <authorList>
            <person name="Reith M.E."/>
            <person name="Singh R.K."/>
            <person name="Curtis B."/>
            <person name="Boyd J.M."/>
            <person name="Bouevitch A."/>
            <person name="Kimball J."/>
            <person name="Munholland J."/>
            <person name="Murphy C."/>
            <person name="Sarty D."/>
            <person name="Williams J."/>
            <person name="Nash J.H."/>
            <person name="Johnson S.C."/>
            <person name="Brown L.L."/>
        </authorList>
    </citation>
    <scope>NUCLEOTIDE SEQUENCE [LARGE SCALE GENOMIC DNA]</scope>
    <source>
        <strain>A449</strain>
    </source>
</reference>
<protein>
    <recommendedName>
        <fullName evidence="1">Large ribosomal subunit protein uL22</fullName>
    </recommendedName>
    <alternativeName>
        <fullName evidence="2">50S ribosomal protein L22</fullName>
    </alternativeName>
</protein>
<dbReference type="EMBL" id="CP000644">
    <property type="protein sequence ID" value="ABO92023.1"/>
    <property type="molecule type" value="Genomic_DNA"/>
</dbReference>
<dbReference type="RefSeq" id="WP_005319741.1">
    <property type="nucleotide sequence ID" value="NC_009348.1"/>
</dbReference>
<dbReference type="SMR" id="A4ST01"/>
<dbReference type="STRING" id="29491.GCA_000820065_03470"/>
<dbReference type="GeneID" id="92809688"/>
<dbReference type="KEGG" id="asa:ASA_4082"/>
<dbReference type="eggNOG" id="COG0091">
    <property type="taxonomic scope" value="Bacteria"/>
</dbReference>
<dbReference type="HOGENOM" id="CLU_083987_3_3_6"/>
<dbReference type="Proteomes" id="UP000000225">
    <property type="component" value="Chromosome"/>
</dbReference>
<dbReference type="GO" id="GO:0022625">
    <property type="term" value="C:cytosolic large ribosomal subunit"/>
    <property type="evidence" value="ECO:0007669"/>
    <property type="project" value="TreeGrafter"/>
</dbReference>
<dbReference type="GO" id="GO:0019843">
    <property type="term" value="F:rRNA binding"/>
    <property type="evidence" value="ECO:0007669"/>
    <property type="project" value="UniProtKB-UniRule"/>
</dbReference>
<dbReference type="GO" id="GO:0003735">
    <property type="term" value="F:structural constituent of ribosome"/>
    <property type="evidence" value="ECO:0007669"/>
    <property type="project" value="InterPro"/>
</dbReference>
<dbReference type="GO" id="GO:0006412">
    <property type="term" value="P:translation"/>
    <property type="evidence" value="ECO:0007669"/>
    <property type="project" value="UniProtKB-UniRule"/>
</dbReference>
<dbReference type="CDD" id="cd00336">
    <property type="entry name" value="Ribosomal_L22"/>
    <property type="match status" value="1"/>
</dbReference>
<dbReference type="FunFam" id="3.90.470.10:FF:000001">
    <property type="entry name" value="50S ribosomal protein L22"/>
    <property type="match status" value="1"/>
</dbReference>
<dbReference type="Gene3D" id="3.90.470.10">
    <property type="entry name" value="Ribosomal protein L22/L17"/>
    <property type="match status" value="1"/>
</dbReference>
<dbReference type="HAMAP" id="MF_01331_B">
    <property type="entry name" value="Ribosomal_uL22_B"/>
    <property type="match status" value="1"/>
</dbReference>
<dbReference type="InterPro" id="IPR001063">
    <property type="entry name" value="Ribosomal_uL22"/>
</dbReference>
<dbReference type="InterPro" id="IPR005727">
    <property type="entry name" value="Ribosomal_uL22_bac/chlpt-type"/>
</dbReference>
<dbReference type="InterPro" id="IPR047867">
    <property type="entry name" value="Ribosomal_uL22_bac/org-type"/>
</dbReference>
<dbReference type="InterPro" id="IPR018260">
    <property type="entry name" value="Ribosomal_uL22_CS"/>
</dbReference>
<dbReference type="InterPro" id="IPR036394">
    <property type="entry name" value="Ribosomal_uL22_sf"/>
</dbReference>
<dbReference type="NCBIfam" id="TIGR01044">
    <property type="entry name" value="rplV_bact"/>
    <property type="match status" value="1"/>
</dbReference>
<dbReference type="PANTHER" id="PTHR13501">
    <property type="entry name" value="CHLOROPLAST 50S RIBOSOMAL PROTEIN L22-RELATED"/>
    <property type="match status" value="1"/>
</dbReference>
<dbReference type="PANTHER" id="PTHR13501:SF8">
    <property type="entry name" value="LARGE RIBOSOMAL SUBUNIT PROTEIN UL22M"/>
    <property type="match status" value="1"/>
</dbReference>
<dbReference type="Pfam" id="PF00237">
    <property type="entry name" value="Ribosomal_L22"/>
    <property type="match status" value="1"/>
</dbReference>
<dbReference type="SUPFAM" id="SSF54843">
    <property type="entry name" value="Ribosomal protein L22"/>
    <property type="match status" value="1"/>
</dbReference>
<dbReference type="PROSITE" id="PS00464">
    <property type="entry name" value="RIBOSOMAL_L22"/>
    <property type="match status" value="1"/>
</dbReference>
<gene>
    <name evidence="1" type="primary">rplV</name>
    <name type="ordered locus">ASA_4082</name>
</gene>